<organism>
    <name type="scientific">Burkholderia pseudomallei (strain 1710b)</name>
    <dbReference type="NCBI Taxonomy" id="320372"/>
    <lineage>
        <taxon>Bacteria</taxon>
        <taxon>Pseudomonadati</taxon>
        <taxon>Pseudomonadota</taxon>
        <taxon>Betaproteobacteria</taxon>
        <taxon>Burkholderiales</taxon>
        <taxon>Burkholderiaceae</taxon>
        <taxon>Burkholderia</taxon>
        <taxon>pseudomallei group</taxon>
    </lineage>
</organism>
<reference key="1">
    <citation type="journal article" date="2010" name="Genome Biol. Evol.">
        <title>Continuing evolution of Burkholderia mallei through genome reduction and large-scale rearrangements.</title>
        <authorList>
            <person name="Losada L."/>
            <person name="Ronning C.M."/>
            <person name="DeShazer D."/>
            <person name="Woods D."/>
            <person name="Fedorova N."/>
            <person name="Kim H.S."/>
            <person name="Shabalina S.A."/>
            <person name="Pearson T.R."/>
            <person name="Brinkac L."/>
            <person name="Tan P."/>
            <person name="Nandi T."/>
            <person name="Crabtree J."/>
            <person name="Badger J."/>
            <person name="Beckstrom-Sternberg S."/>
            <person name="Saqib M."/>
            <person name="Schutzer S.E."/>
            <person name="Keim P."/>
            <person name="Nierman W.C."/>
        </authorList>
    </citation>
    <scope>NUCLEOTIDE SEQUENCE [LARGE SCALE GENOMIC DNA]</scope>
    <source>
        <strain>1710b</strain>
    </source>
</reference>
<comment type="function">
    <text evidence="1">This is one of the proteins that bind and probably mediate the attachment of the 5S RNA into the large ribosomal subunit, where it forms part of the central protuberance.</text>
</comment>
<comment type="subunit">
    <text evidence="1">Part of the 50S ribosomal subunit; part of the 5S rRNA/L5/L18/L25 subcomplex. Contacts the 5S and 23S rRNAs.</text>
</comment>
<comment type="similarity">
    <text evidence="1">Belongs to the universal ribosomal protein uL18 family.</text>
</comment>
<name>RL18_BURP1</name>
<keyword id="KW-0687">Ribonucleoprotein</keyword>
<keyword id="KW-0689">Ribosomal protein</keyword>
<keyword id="KW-0694">RNA-binding</keyword>
<keyword id="KW-0699">rRNA-binding</keyword>
<sequence>MDKTQSRLRRARQTRIKIAELQVARLAVHRTNTHIYAQVFSPCGTKVLASASTLEAEVRAQLADKSGKGGNVAAATLIGKRIAEKAKAAGIESVAFDRSGFRYHGRVKALAEAAREAGLKF</sequence>
<feature type="chain" id="PRO_0000251293" description="Large ribosomal subunit protein uL18">
    <location>
        <begin position="1"/>
        <end position="121"/>
    </location>
</feature>
<gene>
    <name evidence="1" type="primary">rplR</name>
    <name type="ordered locus">BURPS1710b_3760</name>
</gene>
<protein>
    <recommendedName>
        <fullName evidence="1">Large ribosomal subunit protein uL18</fullName>
    </recommendedName>
    <alternativeName>
        <fullName evidence="2">50S ribosomal protein L18</fullName>
    </alternativeName>
</protein>
<proteinExistence type="inferred from homology"/>
<dbReference type="EMBL" id="CP000124">
    <property type="protein sequence ID" value="ABA47821.1"/>
    <property type="molecule type" value="Genomic_DNA"/>
</dbReference>
<dbReference type="RefSeq" id="WP_004197946.1">
    <property type="nucleotide sequence ID" value="NC_007434.1"/>
</dbReference>
<dbReference type="SMR" id="Q3JMS9"/>
<dbReference type="EnsemblBacteria" id="ABA47821">
    <property type="protein sequence ID" value="ABA47821"/>
    <property type="gene ID" value="BURPS1710b_3760"/>
</dbReference>
<dbReference type="GeneID" id="93061816"/>
<dbReference type="KEGG" id="bpm:BURPS1710b_3760"/>
<dbReference type="HOGENOM" id="CLU_098841_0_1_4"/>
<dbReference type="Proteomes" id="UP000002700">
    <property type="component" value="Chromosome I"/>
</dbReference>
<dbReference type="GO" id="GO:0022625">
    <property type="term" value="C:cytosolic large ribosomal subunit"/>
    <property type="evidence" value="ECO:0007669"/>
    <property type="project" value="TreeGrafter"/>
</dbReference>
<dbReference type="GO" id="GO:0008097">
    <property type="term" value="F:5S rRNA binding"/>
    <property type="evidence" value="ECO:0007669"/>
    <property type="project" value="TreeGrafter"/>
</dbReference>
<dbReference type="GO" id="GO:0003735">
    <property type="term" value="F:structural constituent of ribosome"/>
    <property type="evidence" value="ECO:0007669"/>
    <property type="project" value="InterPro"/>
</dbReference>
<dbReference type="GO" id="GO:0006412">
    <property type="term" value="P:translation"/>
    <property type="evidence" value="ECO:0007669"/>
    <property type="project" value="UniProtKB-UniRule"/>
</dbReference>
<dbReference type="CDD" id="cd00432">
    <property type="entry name" value="Ribosomal_L18_L5e"/>
    <property type="match status" value="1"/>
</dbReference>
<dbReference type="FunFam" id="3.30.420.100:FF:000001">
    <property type="entry name" value="50S ribosomal protein L18"/>
    <property type="match status" value="1"/>
</dbReference>
<dbReference type="Gene3D" id="3.30.420.100">
    <property type="match status" value="1"/>
</dbReference>
<dbReference type="HAMAP" id="MF_01337_B">
    <property type="entry name" value="Ribosomal_uL18_B"/>
    <property type="match status" value="1"/>
</dbReference>
<dbReference type="InterPro" id="IPR004389">
    <property type="entry name" value="Ribosomal_uL18_bac-type"/>
</dbReference>
<dbReference type="InterPro" id="IPR005484">
    <property type="entry name" value="Ribosomal_uL18_bac/euk"/>
</dbReference>
<dbReference type="NCBIfam" id="TIGR00060">
    <property type="entry name" value="L18_bact"/>
    <property type="match status" value="1"/>
</dbReference>
<dbReference type="PANTHER" id="PTHR12899">
    <property type="entry name" value="39S RIBOSOMAL PROTEIN L18, MITOCHONDRIAL"/>
    <property type="match status" value="1"/>
</dbReference>
<dbReference type="PANTHER" id="PTHR12899:SF3">
    <property type="entry name" value="LARGE RIBOSOMAL SUBUNIT PROTEIN UL18M"/>
    <property type="match status" value="1"/>
</dbReference>
<dbReference type="Pfam" id="PF00861">
    <property type="entry name" value="Ribosomal_L18p"/>
    <property type="match status" value="1"/>
</dbReference>
<dbReference type="SUPFAM" id="SSF53137">
    <property type="entry name" value="Translational machinery components"/>
    <property type="match status" value="1"/>
</dbReference>
<accession>Q3JMS9</accession>
<evidence type="ECO:0000255" key="1">
    <source>
        <dbReference type="HAMAP-Rule" id="MF_01337"/>
    </source>
</evidence>
<evidence type="ECO:0000305" key="2"/>